<evidence type="ECO:0000250" key="1"/>
<evidence type="ECO:0000255" key="2">
    <source>
        <dbReference type="PROSITE-ProRule" id="PRU01133"/>
    </source>
</evidence>
<reference key="1">
    <citation type="journal article" date="2005" name="Nature">
        <title>Genome sequencing and analysis of Aspergillus oryzae.</title>
        <authorList>
            <person name="Machida M."/>
            <person name="Asai K."/>
            <person name="Sano M."/>
            <person name="Tanaka T."/>
            <person name="Kumagai T."/>
            <person name="Terai G."/>
            <person name="Kusumoto K."/>
            <person name="Arima T."/>
            <person name="Akita O."/>
            <person name="Kashiwagi Y."/>
            <person name="Abe K."/>
            <person name="Gomi K."/>
            <person name="Horiuchi H."/>
            <person name="Kitamoto K."/>
            <person name="Kobayashi T."/>
            <person name="Takeuchi M."/>
            <person name="Denning D.W."/>
            <person name="Galagan J.E."/>
            <person name="Nierman W.C."/>
            <person name="Yu J."/>
            <person name="Archer D.B."/>
            <person name="Bennett J.W."/>
            <person name="Bhatnagar D."/>
            <person name="Cleveland T.E."/>
            <person name="Fedorova N.D."/>
            <person name="Gotoh O."/>
            <person name="Horikawa H."/>
            <person name="Hosoyama A."/>
            <person name="Ichinomiya M."/>
            <person name="Igarashi R."/>
            <person name="Iwashita K."/>
            <person name="Juvvadi P.R."/>
            <person name="Kato M."/>
            <person name="Kato Y."/>
            <person name="Kin T."/>
            <person name="Kokubun A."/>
            <person name="Maeda H."/>
            <person name="Maeyama N."/>
            <person name="Maruyama J."/>
            <person name="Nagasaki H."/>
            <person name="Nakajima T."/>
            <person name="Oda K."/>
            <person name="Okada K."/>
            <person name="Paulsen I."/>
            <person name="Sakamoto K."/>
            <person name="Sawano T."/>
            <person name="Takahashi M."/>
            <person name="Takase K."/>
            <person name="Terabayashi Y."/>
            <person name="Wortman J.R."/>
            <person name="Yamada O."/>
            <person name="Yamagata Y."/>
            <person name="Anazawa H."/>
            <person name="Hata Y."/>
            <person name="Koide Y."/>
            <person name="Komori T."/>
            <person name="Koyama Y."/>
            <person name="Minetoki T."/>
            <person name="Suharnan S."/>
            <person name="Tanaka A."/>
            <person name="Isono K."/>
            <person name="Kuhara S."/>
            <person name="Ogasawara N."/>
            <person name="Kikuchi H."/>
        </authorList>
    </citation>
    <scope>NUCLEOTIDE SEQUENCE [LARGE SCALE GENOMIC DNA]</scope>
    <source>
        <strain>ATCC 42149 / RIB 40</strain>
    </source>
</reference>
<feature type="chain" id="PRO_0000252318" description="Translationally-controlled tumor protein homolog">
    <location>
        <begin position="1"/>
        <end position="173"/>
    </location>
</feature>
<feature type="domain" description="TCTP" evidence="2">
    <location>
        <begin position="1"/>
        <end position="173"/>
    </location>
</feature>
<protein>
    <recommendedName>
        <fullName>Translationally-controlled tumor protein homolog</fullName>
        <shortName>TCTP</shortName>
    </recommendedName>
</protein>
<accession>Q2UR29</accession>
<gene>
    <name type="ORF">AO090005000996</name>
</gene>
<comment type="function">
    <text evidence="1">Involved in protein synthesis. Involved in microtubule stabilization (By similarity).</text>
</comment>
<comment type="subcellular location">
    <subcellularLocation>
        <location evidence="1">Cytoplasm</location>
        <location evidence="1">Cytoskeleton</location>
    </subcellularLocation>
</comment>
<comment type="similarity">
    <text evidence="2">Belongs to the TCTP family.</text>
</comment>
<dbReference type="EMBL" id="BA000049">
    <property type="protein sequence ID" value="BAE55986.1"/>
    <property type="molecule type" value="Genomic_DNA"/>
</dbReference>
<dbReference type="RefSeq" id="XP_001817988.1">
    <property type="nucleotide sequence ID" value="XM_001817936.3"/>
</dbReference>
<dbReference type="SMR" id="Q2UR29"/>
<dbReference type="STRING" id="510516.Q2UR29"/>
<dbReference type="EnsemblFungi" id="BAE55986">
    <property type="protein sequence ID" value="BAE55986"/>
    <property type="gene ID" value="AO090005000996"/>
</dbReference>
<dbReference type="GeneID" id="5989933"/>
<dbReference type="KEGG" id="aor:AO090005000996"/>
<dbReference type="VEuPathDB" id="FungiDB:AO090005000996"/>
<dbReference type="HOGENOM" id="CLU_095877_0_1_1"/>
<dbReference type="OMA" id="PYATVWA"/>
<dbReference type="OrthoDB" id="123513at5052"/>
<dbReference type="Proteomes" id="UP000006564">
    <property type="component" value="Chromosome 1"/>
</dbReference>
<dbReference type="GO" id="GO:0005737">
    <property type="term" value="C:cytoplasm"/>
    <property type="evidence" value="ECO:0007669"/>
    <property type="project" value="UniProtKB-KW"/>
</dbReference>
<dbReference type="GO" id="GO:0005874">
    <property type="term" value="C:microtubule"/>
    <property type="evidence" value="ECO:0007669"/>
    <property type="project" value="UniProtKB-KW"/>
</dbReference>
<dbReference type="GO" id="GO:0005509">
    <property type="term" value="F:calcium ion binding"/>
    <property type="evidence" value="ECO:0007669"/>
    <property type="project" value="TreeGrafter"/>
</dbReference>
<dbReference type="GO" id="GO:0006412">
    <property type="term" value="P:translation"/>
    <property type="evidence" value="ECO:0007669"/>
    <property type="project" value="UniProtKB-KW"/>
</dbReference>
<dbReference type="Gene3D" id="2.170.150.10">
    <property type="entry name" value="Metal Binding Protein, Guanine Nucleotide Exchange Factor, Chain A"/>
    <property type="match status" value="1"/>
</dbReference>
<dbReference type="InterPro" id="IPR011057">
    <property type="entry name" value="Mss4-like_sf"/>
</dbReference>
<dbReference type="InterPro" id="IPR011323">
    <property type="entry name" value="Mss4/transl-control_tumour"/>
</dbReference>
<dbReference type="InterPro" id="IPR034737">
    <property type="entry name" value="TCTP"/>
</dbReference>
<dbReference type="InterPro" id="IPR018103">
    <property type="entry name" value="Translation_control_tumour_CS"/>
</dbReference>
<dbReference type="InterPro" id="IPR018105">
    <property type="entry name" value="Translational_control_tumour_p"/>
</dbReference>
<dbReference type="PANTHER" id="PTHR11991">
    <property type="entry name" value="TRANSLATIONALLY CONTROLLED TUMOR PROTEIN-RELATED"/>
    <property type="match status" value="1"/>
</dbReference>
<dbReference type="PANTHER" id="PTHR11991:SF0">
    <property type="entry name" value="TRANSLATIONALLY-CONTROLLED TUMOR PROTEIN"/>
    <property type="match status" value="1"/>
</dbReference>
<dbReference type="Pfam" id="PF00838">
    <property type="entry name" value="TCTP"/>
    <property type="match status" value="1"/>
</dbReference>
<dbReference type="PRINTS" id="PR01653">
    <property type="entry name" value="TCTPROTEIN"/>
</dbReference>
<dbReference type="SUPFAM" id="SSF51316">
    <property type="entry name" value="Mss4-like"/>
    <property type="match status" value="1"/>
</dbReference>
<dbReference type="PROSITE" id="PS01002">
    <property type="entry name" value="TCTP_1"/>
    <property type="match status" value="1"/>
</dbReference>
<dbReference type="PROSITE" id="PS51797">
    <property type="entry name" value="TCTP_3"/>
    <property type="match status" value="1"/>
</dbReference>
<organism>
    <name type="scientific">Aspergillus oryzae (strain ATCC 42149 / RIB 40)</name>
    <name type="common">Yellow koji mold</name>
    <dbReference type="NCBI Taxonomy" id="510516"/>
    <lineage>
        <taxon>Eukaryota</taxon>
        <taxon>Fungi</taxon>
        <taxon>Dikarya</taxon>
        <taxon>Ascomycota</taxon>
        <taxon>Pezizomycotina</taxon>
        <taxon>Eurotiomycetes</taxon>
        <taxon>Eurotiomycetidae</taxon>
        <taxon>Eurotiales</taxon>
        <taxon>Aspergillaceae</taxon>
        <taxon>Aspergillus</taxon>
        <taxon>Aspergillus subgen. Circumdati</taxon>
    </lineage>
</organism>
<keyword id="KW-0963">Cytoplasm</keyword>
<keyword id="KW-0206">Cytoskeleton</keyword>
<keyword id="KW-0493">Microtubule</keyword>
<keyword id="KW-0648">Protein biosynthesis</keyword>
<keyword id="KW-1185">Reference proteome</keyword>
<proteinExistence type="inferred from homology"/>
<sequence length="173" mass="19708">MIIYKDILTGDEIISDAFNLKEVDNILWEVDCRNITIGDENIQLEGANPSAEGEDDDAGGAGNAEQVLDIKHNFRLNDYPKLEKDEYKKAIKGYMKKVLAKLEEKKAPEETIKEFKENAQTALKRILANYKDYDVLVGESFGADAMHILINYREDGVTPYATFWKHGLEEYKV</sequence>
<name>TCTP_ASPOR</name>